<evidence type="ECO:0000250" key="1"/>
<evidence type="ECO:0000255" key="2">
    <source>
        <dbReference type="HAMAP-Rule" id="MF_00403"/>
    </source>
</evidence>
<evidence type="ECO:0000305" key="3"/>
<reference key="1">
    <citation type="journal article" date="2001" name="J. Bacteriol.">
        <title>Degenerative minimalism in the genome of a psyllid endosymbiont.</title>
        <authorList>
            <person name="Clark M.A."/>
            <person name="Baumann L."/>
            <person name="Thao M.L."/>
            <person name="Moran N.A."/>
            <person name="Baumann P."/>
        </authorList>
    </citation>
    <scope>NUCLEOTIDE SEQUENCE [GENOMIC DNA]</scope>
</reference>
<protein>
    <recommendedName>
        <fullName evidence="2">Small ribosomal subunit protein uS12</fullName>
    </recommendedName>
    <alternativeName>
        <fullName evidence="3">30S ribosomal protein S12</fullName>
    </alternativeName>
</protein>
<feature type="chain" id="PRO_0000146201" description="Small ribosomal subunit protein uS12">
    <location>
        <begin position="1"/>
        <end position="120"/>
    </location>
</feature>
<feature type="modified residue" description="3-methylthioaspartic acid" evidence="1">
    <location>
        <position position="88"/>
    </location>
</feature>
<dbReference type="EMBL" id="AF274444">
    <property type="protein sequence ID" value="AAK17077.1"/>
    <property type="molecule type" value="Genomic_DNA"/>
</dbReference>
<dbReference type="SMR" id="Q9AIG9"/>
<dbReference type="GO" id="GO:0015935">
    <property type="term" value="C:small ribosomal subunit"/>
    <property type="evidence" value="ECO:0007669"/>
    <property type="project" value="InterPro"/>
</dbReference>
<dbReference type="GO" id="GO:0019843">
    <property type="term" value="F:rRNA binding"/>
    <property type="evidence" value="ECO:0007669"/>
    <property type="project" value="UniProtKB-UniRule"/>
</dbReference>
<dbReference type="GO" id="GO:0003735">
    <property type="term" value="F:structural constituent of ribosome"/>
    <property type="evidence" value="ECO:0007669"/>
    <property type="project" value="InterPro"/>
</dbReference>
<dbReference type="GO" id="GO:0000049">
    <property type="term" value="F:tRNA binding"/>
    <property type="evidence" value="ECO:0007669"/>
    <property type="project" value="UniProtKB-UniRule"/>
</dbReference>
<dbReference type="GO" id="GO:0006412">
    <property type="term" value="P:translation"/>
    <property type="evidence" value="ECO:0007669"/>
    <property type="project" value="UniProtKB-UniRule"/>
</dbReference>
<dbReference type="CDD" id="cd03368">
    <property type="entry name" value="Ribosomal_S12"/>
    <property type="match status" value="1"/>
</dbReference>
<dbReference type="FunFam" id="2.40.50.140:FF:000099">
    <property type="entry name" value="Ribosomal protein S12, mitochondrial"/>
    <property type="match status" value="1"/>
</dbReference>
<dbReference type="Gene3D" id="2.40.50.140">
    <property type="entry name" value="Nucleic acid-binding proteins"/>
    <property type="match status" value="1"/>
</dbReference>
<dbReference type="HAMAP" id="MF_00403_B">
    <property type="entry name" value="Ribosomal_uS12_B"/>
    <property type="match status" value="1"/>
</dbReference>
<dbReference type="InterPro" id="IPR012340">
    <property type="entry name" value="NA-bd_OB-fold"/>
</dbReference>
<dbReference type="InterPro" id="IPR006032">
    <property type="entry name" value="Ribosomal_uS12"/>
</dbReference>
<dbReference type="InterPro" id="IPR005679">
    <property type="entry name" value="Ribosomal_uS12_bac"/>
</dbReference>
<dbReference type="NCBIfam" id="TIGR00981">
    <property type="entry name" value="rpsL_bact"/>
    <property type="match status" value="1"/>
</dbReference>
<dbReference type="PANTHER" id="PTHR11652">
    <property type="entry name" value="30S RIBOSOMAL PROTEIN S12 FAMILY MEMBER"/>
    <property type="match status" value="1"/>
</dbReference>
<dbReference type="Pfam" id="PF00164">
    <property type="entry name" value="Ribosom_S12_S23"/>
    <property type="match status" value="1"/>
</dbReference>
<dbReference type="PIRSF" id="PIRSF002133">
    <property type="entry name" value="Ribosomal_S12/S23"/>
    <property type="match status" value="1"/>
</dbReference>
<dbReference type="PRINTS" id="PR01034">
    <property type="entry name" value="RIBOSOMALS12"/>
</dbReference>
<dbReference type="SUPFAM" id="SSF50249">
    <property type="entry name" value="Nucleic acid-binding proteins"/>
    <property type="match status" value="1"/>
</dbReference>
<dbReference type="PROSITE" id="PS00055">
    <property type="entry name" value="RIBOSOMAL_S12"/>
    <property type="match status" value="1"/>
</dbReference>
<keyword id="KW-0488">Methylation</keyword>
<keyword id="KW-0687">Ribonucleoprotein</keyword>
<keyword id="KW-0689">Ribosomal protein</keyword>
<keyword id="KW-0694">RNA-binding</keyword>
<keyword id="KW-0699">rRNA-binding</keyword>
<keyword id="KW-0820">tRNA-binding</keyword>
<gene>
    <name evidence="2" type="primary">rpsL</name>
    <name evidence="2" type="synonym">rps12</name>
</gene>
<name>RS12_CARRU</name>
<organism>
    <name type="scientific">Carsonella ruddii</name>
    <dbReference type="NCBI Taxonomy" id="114186"/>
    <lineage>
        <taxon>Bacteria</taxon>
        <taxon>Pseudomonadati</taxon>
        <taxon>Pseudomonadota</taxon>
        <taxon>Gammaproteobacteria</taxon>
        <taxon>Oceanospirillales</taxon>
        <taxon>Halomonadaceae</taxon>
        <taxon>Zymobacter group</taxon>
        <taxon>Candidatus Carsonella</taxon>
    </lineage>
</organism>
<proteinExistence type="inferred from homology"/>
<accession>Q9AIG9</accession>
<sequence length="120" mass="13614">MTLNQILKFKRKKSVKKKKTPALLSSPQKKGICIKVYTTTPKKPNSALRKVCRVKLSNKNEITAYIPGEGHNLQEHSNVLVRGGRVKDLPGVKYHIIRNVYDLSGVINRKTSRSKYGKKK</sequence>
<comment type="function">
    <text evidence="2">With S4 and S5 plays an important role in translational accuracy.</text>
</comment>
<comment type="function">
    <text evidence="2">Interacts with and stabilizes bases of the 16S rRNA that are involved in tRNA selection in the A site and with the mRNA backbone. Located at the interface of the 30S and 50S subunits, it traverses the body of the 30S subunit contacting proteins on the other side and probably holding the rRNA structure together. The combined cluster of proteins S8, S12 and S17 appears to hold together the shoulder and platform of the 30S subunit.</text>
</comment>
<comment type="subunit">
    <text evidence="2">Part of the 30S ribosomal subunit. Contacts proteins S8 and S17. May interact with IF1 in the 30S initiation complex.</text>
</comment>
<comment type="similarity">
    <text evidence="2">Belongs to the universal ribosomal protein uS12 family.</text>
</comment>